<accession>Q4H4E4</accession>
<dbReference type="EC" id="3.1.3.88"/>
<dbReference type="EMBL" id="AB097196">
    <property type="protein sequence ID" value="BAE07077.1"/>
    <property type="molecule type" value="Genomic_DNA"/>
</dbReference>
<dbReference type="EMBL" id="AJ781030">
    <property type="protein sequence ID" value="CAG77431.1"/>
    <property type="molecule type" value="Genomic_DNA"/>
</dbReference>
<dbReference type="SMR" id="Q4H4E4"/>
<dbReference type="KEGG" id="ag:BAE07077"/>
<dbReference type="BioCyc" id="MetaCyc:MONOMER-17255"/>
<dbReference type="UniPathway" id="UPA00964"/>
<dbReference type="GO" id="GO:0016791">
    <property type="term" value="F:phosphatase activity"/>
    <property type="evidence" value="ECO:0000314"/>
    <property type="project" value="UniProtKB"/>
</dbReference>
<dbReference type="GO" id="GO:0017000">
    <property type="term" value="P:antibiotic biosynthetic process"/>
    <property type="evidence" value="ECO:0000314"/>
    <property type="project" value="UniProtKB"/>
</dbReference>
<dbReference type="CDD" id="cd07067">
    <property type="entry name" value="HP_PGM_like"/>
    <property type="match status" value="1"/>
</dbReference>
<dbReference type="Gene3D" id="3.40.50.1240">
    <property type="entry name" value="Phosphoglycerate mutase-like"/>
    <property type="match status" value="1"/>
</dbReference>
<dbReference type="InterPro" id="IPR013078">
    <property type="entry name" value="His_Pase_superF_clade-1"/>
</dbReference>
<dbReference type="InterPro" id="IPR029033">
    <property type="entry name" value="His_PPase_superfam"/>
</dbReference>
<dbReference type="InterPro" id="IPR050275">
    <property type="entry name" value="PGM_Phosphatase"/>
</dbReference>
<dbReference type="PANTHER" id="PTHR48100">
    <property type="entry name" value="BROAD-SPECIFICITY PHOSPHATASE YOR283W-RELATED"/>
    <property type="match status" value="1"/>
</dbReference>
<dbReference type="Pfam" id="PF00300">
    <property type="entry name" value="His_Phos_1"/>
    <property type="match status" value="1"/>
</dbReference>
<dbReference type="SMART" id="SM00855">
    <property type="entry name" value="PGAM"/>
    <property type="match status" value="1"/>
</dbReference>
<dbReference type="SUPFAM" id="SSF53254">
    <property type="entry name" value="Phosphoglycerate mutase-like"/>
    <property type="match status" value="1"/>
</dbReference>
<proteinExistence type="evidence at protein level"/>
<reference key="1">
    <citation type="journal article" date="2005" name="J. Antibiot.">
        <title>Extended sequence and functional analysis of the butirosin biosynthetic gene cluster in Bacillus circulans SANK 72073.</title>
        <authorList>
            <person name="Kudo F."/>
            <person name="Numakura M."/>
            <person name="Tamegai H."/>
            <person name="Yamamoto H."/>
            <person name="Eguchi T."/>
            <person name="Kakinuma K."/>
        </authorList>
    </citation>
    <scope>NUCLEOTIDE SEQUENCE [GENOMIC DNA]</scope>
    <source>
        <strain>ATCC 21557 / NCIMB 12336 / BU-1709-YQW-B6</strain>
    </source>
</reference>
<reference key="2">
    <citation type="submission" date="2004-06" db="EMBL/GenBank/DDBJ databases">
        <title>Analysis and comparison of the biosynthetic gene clusters for the 2-deoxystreptamine-containing aminoglycoside antibiotics ribostamycin, neomycin, lividomycin, paromomycin and butirosin.</title>
        <authorList>
            <person name="Aboshanab K.M."/>
            <person name="Schmidt-Beissner H."/>
            <person name="Wehmeier U.F."/>
            <person name="Welzel K."/>
            <person name="Vente A."/>
            <person name="Piepersberg W."/>
        </authorList>
    </citation>
    <scope>NUCLEOTIDE SEQUENCE [GENOMIC DNA]</scope>
    <source>
        <strain>ATCC 21557 / NCIMB 12336 / BU-1709-YQW-B6</strain>
    </source>
</reference>
<reference key="3">
    <citation type="journal article" date="2007" name="Bioorg. Med. Chem.">
        <title>Unique O-ribosylation in the biosynthesis of butirosin.</title>
        <authorList>
            <person name="Kudo F."/>
            <person name="Fujii T."/>
            <person name="Kinoshita S."/>
            <person name="Eguchi T."/>
        </authorList>
    </citation>
    <scope>FUNCTION</scope>
    <scope>CATALYTIC ACTIVITY</scope>
    <scope>PATHWAY</scope>
    <source>
        <strain>SANK 72073</strain>
    </source>
</reference>
<gene>
    <name type="primary">btrP</name>
</gene>
<comment type="function">
    <text evidence="2">Catalyzes dephosphorylation of 5''-phosphoribostamycin to generate ribostamycinin the biosynthetic pathway of butirosin.</text>
</comment>
<comment type="catalytic activity">
    <reaction evidence="2">
        <text>5''-phosphoribostamycin + H2O = ribostamycin + phosphate</text>
        <dbReference type="Rhea" id="RHEA:33971"/>
        <dbReference type="ChEBI" id="CHEBI:15377"/>
        <dbReference type="ChEBI" id="CHEBI:43474"/>
        <dbReference type="ChEBI" id="CHEBI:65028"/>
        <dbReference type="ChEBI" id="CHEBI:65082"/>
        <dbReference type="EC" id="3.1.3.88"/>
    </reaction>
</comment>
<comment type="pathway">
    <text evidence="2">Antibiotic biosynthesis; butirosin biosynthesis.</text>
</comment>
<comment type="similarity">
    <text evidence="3">Belongs to the histidine phosphatase superfamily.</text>
</comment>
<sequence length="213" mass="24505">MRLILIRHAQARCNILEDDALMDAYDPHCELTEAGIGQAVKLRDEYPVSLTPSVIYSSPLKRARETAGIFRGRYPSVPFVEDERLSELKAPESFIPPITQGQWDLYLEQRIRSPHLEIVKGLESLDVQRERIERFYKDLFRKYAEEACNIVIFTHAFSIQLSILFFLGLGNEQLLQWQIKASNTAMHIIHYDPTSGSFLLESLNNRSHLQTTG</sequence>
<evidence type="ECO:0000250" key="1"/>
<evidence type="ECO:0000269" key="2">
    <source>
    </source>
</evidence>
<evidence type="ECO:0000305" key="3"/>
<keyword id="KW-0045">Antibiotic biosynthesis</keyword>
<keyword id="KW-0378">Hydrolase</keyword>
<protein>
    <recommendedName>
        <fullName>5''-phosphoribostamycin phosphatase</fullName>
        <ecNumber>3.1.3.88</ecNumber>
    </recommendedName>
    <alternativeName>
        <fullName>Butirosin biosynthesis protein P</fullName>
    </alternativeName>
</protein>
<organism>
    <name type="scientific">Niallia circulans</name>
    <name type="common">Bacillus circulans</name>
    <dbReference type="NCBI Taxonomy" id="1397"/>
    <lineage>
        <taxon>Bacteria</taxon>
        <taxon>Bacillati</taxon>
        <taxon>Bacillota</taxon>
        <taxon>Bacilli</taxon>
        <taxon>Bacillales</taxon>
        <taxon>Bacillaceae</taxon>
        <taxon>Niallia</taxon>
    </lineage>
</organism>
<name>BTRP_NIACI</name>
<feature type="chain" id="PRO_0000421729" description="5''-phosphoribostamycin phosphatase">
    <location>
        <begin position="1"/>
        <end position="213"/>
    </location>
</feature>
<feature type="active site" description="Tele-phosphohistidine intermediate" evidence="1">
    <location>
        <position position="8"/>
    </location>
</feature>
<feature type="active site" evidence="1">
    <location>
        <position position="155"/>
    </location>
</feature>
<feature type="site" description="Important for activity" evidence="1">
    <location>
        <position position="62"/>
    </location>
</feature>